<keyword id="KW-0134">Cell wall</keyword>
<keyword id="KW-0325">Glycoprotein</keyword>
<keyword id="KW-0336">GPI-anchor</keyword>
<keyword id="KW-0449">Lipoprotein</keyword>
<keyword id="KW-0472">Membrane</keyword>
<keyword id="KW-1185">Reference proteome</keyword>
<keyword id="KW-0964">Secreted</keyword>
<keyword id="KW-0732">Signal</keyword>
<keyword id="KW-0843">Virulence</keyword>
<proteinExistence type="evidence at protein level"/>
<sequence length="309" mass="33997">MKLNLLLLLFIVELVAAVTNYNLGSAPVSRYLSKTGTYSPVAASRVCNDNCYSFYEGELFCGKFDSNVSETDYLNCLCLNKQYRSNFEGCNCKSESEVNFFDWKSSCSDISSVKNYSLPTTQLGTCNSHCSAYQTIPAECLVYESGKYQEDQVCICQNAEFWYHYENCDCLDFGDVDHEYEDICYYATNSFVTSDDYYDSFFATYTEGSFESILEKGSFLAEQKGSITSGLASKTETSKVSTTTFSSNGTSSGTTNGDTRAETKSSNSTQTSSSDKNSSQINSISSTGVANFVASFGMGTLLLFVLSLC</sequence>
<evidence type="ECO:0000250" key="1"/>
<evidence type="ECO:0000255" key="2"/>
<evidence type="ECO:0000255" key="3">
    <source>
        <dbReference type="PROSITE-ProRule" id="PRU00498"/>
    </source>
</evidence>
<evidence type="ECO:0000256" key="4">
    <source>
        <dbReference type="SAM" id="MobiDB-lite"/>
    </source>
</evidence>
<evidence type="ECO:0000305" key="5"/>
<accession>Q59MD0</accession>
<accession>A0A1D8PDR6</accession>
<reference key="1">
    <citation type="journal article" date="2004" name="Proc. Natl. Acad. Sci. U.S.A.">
        <title>The diploid genome sequence of Candida albicans.</title>
        <authorList>
            <person name="Jones T."/>
            <person name="Federspiel N.A."/>
            <person name="Chibana H."/>
            <person name="Dungan J."/>
            <person name="Kalman S."/>
            <person name="Magee B.B."/>
            <person name="Newport G."/>
            <person name="Thorstenson Y.R."/>
            <person name="Agabian N."/>
            <person name="Magee P.T."/>
            <person name="Davis R.W."/>
            <person name="Scherer S."/>
        </authorList>
    </citation>
    <scope>NUCLEOTIDE SEQUENCE [LARGE SCALE GENOMIC DNA]</scope>
    <source>
        <strain>SC5314 / ATCC MYA-2876</strain>
    </source>
</reference>
<reference key="2">
    <citation type="journal article" date="2007" name="Genome Biol.">
        <title>Assembly of the Candida albicans genome into sixteen supercontigs aligned on the eight chromosomes.</title>
        <authorList>
            <person name="van het Hoog M."/>
            <person name="Rast T.J."/>
            <person name="Martchenko M."/>
            <person name="Grindle S."/>
            <person name="Dignard D."/>
            <person name="Hogues H."/>
            <person name="Cuomo C."/>
            <person name="Berriman M."/>
            <person name="Scherer S."/>
            <person name="Magee B.B."/>
            <person name="Whiteway M."/>
            <person name="Chibana H."/>
            <person name="Nantel A."/>
            <person name="Magee P.T."/>
        </authorList>
    </citation>
    <scope>GENOME REANNOTATION</scope>
    <source>
        <strain>SC5314 / ATCC MYA-2876</strain>
    </source>
</reference>
<reference key="3">
    <citation type="journal article" date="2013" name="Genome Biol.">
        <title>Assembly of a phased diploid Candida albicans genome facilitates allele-specific measurements and provides a simple model for repeat and indel structure.</title>
        <authorList>
            <person name="Muzzey D."/>
            <person name="Schwartz K."/>
            <person name="Weissman J.S."/>
            <person name="Sherlock G."/>
        </authorList>
    </citation>
    <scope>NUCLEOTIDE SEQUENCE [LARGE SCALE GENOMIC DNA]</scope>
    <scope>GENOME REANNOTATION</scope>
    <source>
        <strain>SC5314 / ATCC MYA-2876</strain>
    </source>
</reference>
<reference key="4">
    <citation type="journal article" date="2003" name="Yeast">
        <title>Genome-wide identification of fungal GPI proteins.</title>
        <authorList>
            <person name="De Groot P.W."/>
            <person name="Hellingwerf K.J."/>
            <person name="Klis F.M."/>
        </authorList>
    </citation>
    <scope>PREDICTION OF GPI-ANCHOR</scope>
</reference>
<protein>
    <recommendedName>
        <fullName>Probable cell wall protein PGA50</fullName>
    </recommendedName>
    <alternativeName>
        <fullName>Predicted GPI-anchored protein 50</fullName>
    </alternativeName>
</protein>
<organism>
    <name type="scientific">Candida albicans (strain SC5314 / ATCC MYA-2876)</name>
    <name type="common">Yeast</name>
    <dbReference type="NCBI Taxonomy" id="237561"/>
    <lineage>
        <taxon>Eukaryota</taxon>
        <taxon>Fungi</taxon>
        <taxon>Dikarya</taxon>
        <taxon>Ascomycota</taxon>
        <taxon>Saccharomycotina</taxon>
        <taxon>Pichiomycetes</taxon>
        <taxon>Debaryomycetaceae</taxon>
        <taxon>Candida/Lodderomyces clade</taxon>
        <taxon>Candida</taxon>
    </lineage>
</organism>
<dbReference type="EMBL" id="CP017623">
    <property type="protein sequence ID" value="AOW26287.1"/>
    <property type="molecule type" value="Genomic_DNA"/>
</dbReference>
<dbReference type="RefSeq" id="XP_710875.2">
    <property type="nucleotide sequence ID" value="XM_705783.2"/>
</dbReference>
<dbReference type="SMR" id="Q59MD0"/>
<dbReference type="STRING" id="237561.Q59MD0"/>
<dbReference type="GlyCosmos" id="Q59MD0">
    <property type="glycosylation" value="5 sites, No reported glycans"/>
</dbReference>
<dbReference type="EnsemblFungi" id="C1_06260W_A-T">
    <property type="protein sequence ID" value="C1_06260W_A-T-p1"/>
    <property type="gene ID" value="C1_06260W_A"/>
</dbReference>
<dbReference type="GeneID" id="3647524"/>
<dbReference type="KEGG" id="cal:CAALFM_C106260WA"/>
<dbReference type="CGD" id="CAL0000197770">
    <property type="gene designation" value="PGA50"/>
</dbReference>
<dbReference type="VEuPathDB" id="FungiDB:C1_06260W_A"/>
<dbReference type="HOGENOM" id="CLU_900138_0_0_1"/>
<dbReference type="InParanoid" id="Q59MD0"/>
<dbReference type="OrthoDB" id="10303755at2759"/>
<dbReference type="PRO" id="PR:Q59MD0"/>
<dbReference type="Proteomes" id="UP000000559">
    <property type="component" value="Chromosome 1"/>
</dbReference>
<dbReference type="GO" id="GO:0005576">
    <property type="term" value="C:extracellular region"/>
    <property type="evidence" value="ECO:0007669"/>
    <property type="project" value="UniProtKB-KW"/>
</dbReference>
<dbReference type="GO" id="GO:0098552">
    <property type="term" value="C:side of membrane"/>
    <property type="evidence" value="ECO:0007669"/>
    <property type="project" value="UniProtKB-KW"/>
</dbReference>
<name>PGA50_CANAL</name>
<gene>
    <name type="primary">PGA50</name>
    <name type="ordered locus">CAALFM_C106260WA</name>
    <name type="ORF">CaO19.1824</name>
    <name type="ORF">CaO19.9383</name>
</gene>
<feature type="signal peptide" evidence="2">
    <location>
        <begin position="1"/>
        <end position="17"/>
    </location>
</feature>
<feature type="chain" id="PRO_0000424743" description="Probable cell wall protein PGA50">
    <location>
        <begin position="18"/>
        <end position="286"/>
    </location>
</feature>
<feature type="propeptide" id="PRO_0000424744" description="Removed in mature form" evidence="2">
    <location>
        <begin position="287"/>
        <end position="309"/>
    </location>
</feature>
<feature type="region of interest" description="Disordered" evidence="4">
    <location>
        <begin position="241"/>
        <end position="281"/>
    </location>
</feature>
<feature type="lipid moiety-binding region" description="GPI-anchor amidated serine" evidence="2">
    <location>
        <position position="286"/>
    </location>
</feature>
<feature type="glycosylation site" description="N-linked (GlcNAc...) asparagine" evidence="3">
    <location>
        <position position="67"/>
    </location>
</feature>
<feature type="glycosylation site" description="N-linked (GlcNAc...) asparagine" evidence="3">
    <location>
        <position position="115"/>
    </location>
</feature>
<feature type="glycosylation site" description="N-linked (GlcNAc...) asparagine" evidence="3">
    <location>
        <position position="248"/>
    </location>
</feature>
<feature type="glycosylation site" description="N-linked (GlcNAc...) asparagine" evidence="3">
    <location>
        <position position="267"/>
    </location>
</feature>
<feature type="glycosylation site" description="N-linked (GlcNAc...) asparagine" evidence="3">
    <location>
        <position position="277"/>
    </location>
</feature>
<comment type="function">
    <text evidence="1">Probable GPI-anchored cell wall protein that may be involved in cell wall organization, hyphal growth, as well as in virulence.</text>
</comment>
<comment type="subcellular location">
    <subcellularLocation>
        <location evidence="1">Secreted</location>
        <location evidence="1">Cell wall</location>
    </subcellularLocation>
    <subcellularLocation>
        <location evidence="5">Membrane</location>
        <topology evidence="5">Lipid-anchor</topology>
        <topology evidence="5">GPI-anchor</topology>
    </subcellularLocation>
</comment>
<comment type="PTM">
    <text evidence="1">The GPI-anchor is attached to the protein in the endoplasmic reticulum and serves to target the protein to the cell surface. There, the glucosamine-inositol phospholipid moiety is cleaved off and the GPI-modified mannoprotein is covalently attached via its lipidless GPI glycan remnant to the 1,6-beta-glucan of the outer cell wall layer (By similarity).</text>
</comment>
<comment type="similarity">
    <text evidence="5">Belongs to the IHD1 family.</text>
</comment>